<keyword id="KW-0029">Amino-acid transport</keyword>
<keyword id="KW-0472">Membrane</keyword>
<keyword id="KW-1185">Reference proteome</keyword>
<keyword id="KW-0732">Signal</keyword>
<keyword id="KW-0812">Transmembrane</keyword>
<keyword id="KW-1133">Transmembrane helix</keyword>
<keyword id="KW-0813">Transport</keyword>
<keyword id="KW-0926">Vacuole</keyword>
<proteinExistence type="inferred from homology"/>
<protein>
    <recommendedName>
        <fullName>Protein BTN1</fullName>
    </recommendedName>
</protein>
<gene>
    <name type="primary">YHC3</name>
    <name type="synonym">BTN1</name>
    <name type="ordered locus">YJL059W</name>
    <name type="ORF">J1139</name>
</gene>
<comment type="function">
    <text evidence="2 3 4 5 6">Plays a role in vacuolar arginine transport. Involved in pH homeostasis. May be involved in ion homeostasis together with IST2. Not necessary for mitochondrial function or ATP synthase degradation.</text>
</comment>
<comment type="subcellular location">
    <subcellularLocation>
        <location evidence="2 7">Vacuole membrane</location>
        <topology evidence="2 7">Multi-pass membrane protein</topology>
    </subcellularLocation>
</comment>
<comment type="similarity">
    <text evidence="8">Belongs to the battenin family.</text>
</comment>
<accession>P47040</accession>
<accession>D6VWC3</accession>
<accession>O60004</accession>
<accession>Q6B1E1</accession>
<name>BTN1_YEAST</name>
<evidence type="ECO:0000255" key="1"/>
<evidence type="ECO:0000269" key="2">
    <source>
    </source>
</evidence>
<evidence type="ECO:0000269" key="3">
    <source>
    </source>
</evidence>
<evidence type="ECO:0000269" key="4">
    <source>
    </source>
</evidence>
<evidence type="ECO:0000269" key="5">
    <source>
    </source>
</evidence>
<evidence type="ECO:0000269" key="6">
    <source>
    </source>
</evidence>
<evidence type="ECO:0000269" key="7">
    <source>
    </source>
</evidence>
<evidence type="ECO:0000305" key="8"/>
<dbReference type="EMBL" id="AF058447">
    <property type="protein sequence ID" value="AAC61258.1"/>
    <property type="molecule type" value="Genomic_DNA"/>
</dbReference>
<dbReference type="EMBL" id="Z49334">
    <property type="protein sequence ID" value="CAA89350.1"/>
    <property type="molecule type" value="Genomic_DNA"/>
</dbReference>
<dbReference type="EMBL" id="AY693139">
    <property type="protein sequence ID" value="AAT93158.1"/>
    <property type="molecule type" value="Genomic_DNA"/>
</dbReference>
<dbReference type="EMBL" id="BK006943">
    <property type="protein sequence ID" value="DAA08739.1"/>
    <property type="molecule type" value="Genomic_DNA"/>
</dbReference>
<dbReference type="PIR" id="S56831">
    <property type="entry name" value="S56831"/>
</dbReference>
<dbReference type="RefSeq" id="NP_012476.1">
    <property type="nucleotide sequence ID" value="NM_001181492.1"/>
</dbReference>
<dbReference type="SMR" id="P47040"/>
<dbReference type="BioGRID" id="33695">
    <property type="interactions" value="60"/>
</dbReference>
<dbReference type="DIP" id="DIP-4761N"/>
<dbReference type="FunCoup" id="P47040">
    <property type="interactions" value="143"/>
</dbReference>
<dbReference type="IntAct" id="P47040">
    <property type="interactions" value="1"/>
</dbReference>
<dbReference type="MINT" id="P47040"/>
<dbReference type="STRING" id="4932.YJL059W"/>
<dbReference type="TCDB" id="2.A.57.5.2">
    <property type="family name" value="the equilibrative nucleoside transporter (ent) family"/>
</dbReference>
<dbReference type="PaxDb" id="4932-YJL059W"/>
<dbReference type="PeptideAtlas" id="P47040"/>
<dbReference type="EnsemblFungi" id="YJL059W_mRNA">
    <property type="protein sequence ID" value="YJL059W"/>
    <property type="gene ID" value="YJL059W"/>
</dbReference>
<dbReference type="GeneID" id="853387"/>
<dbReference type="KEGG" id="sce:YJL059W"/>
<dbReference type="AGR" id="SGD:S000003595"/>
<dbReference type="SGD" id="S000003595">
    <property type="gene designation" value="YHC3"/>
</dbReference>
<dbReference type="VEuPathDB" id="FungiDB:YJL059W"/>
<dbReference type="eggNOG" id="KOG3880">
    <property type="taxonomic scope" value="Eukaryota"/>
</dbReference>
<dbReference type="GeneTree" id="ENSGT00390000003249"/>
<dbReference type="HOGENOM" id="CLU_029663_1_2_1"/>
<dbReference type="InParanoid" id="P47040"/>
<dbReference type="OMA" id="WLCNWQV"/>
<dbReference type="OrthoDB" id="5965864at2759"/>
<dbReference type="BioCyc" id="YEAST:G3O-31522-MONOMER"/>
<dbReference type="Reactome" id="R-SCE-9845576">
    <property type="pathway name" value="Glycosphingolipid transport"/>
</dbReference>
<dbReference type="BioGRID-ORCS" id="853387">
    <property type="hits" value="1 hit in 10 CRISPR screens"/>
</dbReference>
<dbReference type="PRO" id="PR:P47040"/>
<dbReference type="Proteomes" id="UP000002311">
    <property type="component" value="Chromosome X"/>
</dbReference>
<dbReference type="RNAct" id="P47040">
    <property type="molecule type" value="protein"/>
</dbReference>
<dbReference type="GO" id="GO:0000324">
    <property type="term" value="C:fungal-type vacuole"/>
    <property type="evidence" value="ECO:0000314"/>
    <property type="project" value="SGD"/>
</dbReference>
<dbReference type="GO" id="GO:0005774">
    <property type="term" value="C:vacuolar membrane"/>
    <property type="evidence" value="ECO:0007669"/>
    <property type="project" value="UniProtKB-SubCell"/>
</dbReference>
<dbReference type="GO" id="GO:0005773">
    <property type="term" value="C:vacuole"/>
    <property type="evidence" value="ECO:0000318"/>
    <property type="project" value="GO_Central"/>
</dbReference>
<dbReference type="GO" id="GO:1903826">
    <property type="term" value="P:L-arginine transmembrane transport"/>
    <property type="evidence" value="ECO:0000315"/>
    <property type="project" value="SGD"/>
</dbReference>
<dbReference type="GO" id="GO:0015819">
    <property type="term" value="P:lysine transport"/>
    <property type="evidence" value="ECO:0000315"/>
    <property type="project" value="SGD"/>
</dbReference>
<dbReference type="GO" id="GO:0051453">
    <property type="term" value="P:regulation of intracellular pH"/>
    <property type="evidence" value="ECO:0000315"/>
    <property type="project" value="SGD"/>
</dbReference>
<dbReference type="FunFam" id="1.20.1250.20:FF:000981">
    <property type="entry name" value="Protein BTN"/>
    <property type="match status" value="1"/>
</dbReference>
<dbReference type="Gene3D" id="1.20.1250.20">
    <property type="entry name" value="MFS general substrate transporter like domains"/>
    <property type="match status" value="1"/>
</dbReference>
<dbReference type="InterPro" id="IPR003492">
    <property type="entry name" value="Battenin_disease_Cln3"/>
</dbReference>
<dbReference type="InterPro" id="IPR018460">
    <property type="entry name" value="Battenin_disease_Cln3_subgr"/>
</dbReference>
<dbReference type="InterPro" id="IPR036259">
    <property type="entry name" value="MFS_trans_sf"/>
</dbReference>
<dbReference type="PANTHER" id="PTHR10981">
    <property type="entry name" value="BATTENIN"/>
    <property type="match status" value="1"/>
</dbReference>
<dbReference type="PANTHER" id="PTHR10981:SF0">
    <property type="entry name" value="BATTENIN"/>
    <property type="match status" value="1"/>
</dbReference>
<dbReference type="Pfam" id="PF02487">
    <property type="entry name" value="CLN3"/>
    <property type="match status" value="1"/>
</dbReference>
<dbReference type="PIRSF" id="PIRSF015974">
    <property type="entry name" value="CLN3_BTN1"/>
    <property type="match status" value="1"/>
</dbReference>
<dbReference type="PRINTS" id="PR01315">
    <property type="entry name" value="BATTENIN"/>
</dbReference>
<dbReference type="SUPFAM" id="SSF103473">
    <property type="entry name" value="MFS general substrate transporter"/>
    <property type="match status" value="1"/>
</dbReference>
<feature type="signal peptide" evidence="1">
    <location>
        <begin position="1"/>
        <end position="30"/>
    </location>
</feature>
<feature type="chain" id="PRO_0000020836" description="Protein BTN1">
    <location>
        <begin position="31"/>
        <end position="408"/>
    </location>
</feature>
<feature type="transmembrane region" description="Helical" evidence="1">
    <location>
        <begin position="42"/>
        <end position="62"/>
    </location>
</feature>
<feature type="transmembrane region" description="Helical" evidence="1">
    <location>
        <begin position="80"/>
        <end position="100"/>
    </location>
</feature>
<feature type="transmembrane region" description="Helical" evidence="1">
    <location>
        <begin position="128"/>
        <end position="148"/>
    </location>
</feature>
<feature type="transmembrane region" description="Helical" evidence="1">
    <location>
        <begin position="150"/>
        <end position="170"/>
    </location>
</feature>
<feature type="transmembrane region" description="Helical" evidence="1">
    <location>
        <begin position="238"/>
        <end position="258"/>
    </location>
</feature>
<feature type="transmembrane region" description="Helical" evidence="1">
    <location>
        <begin position="323"/>
        <end position="343"/>
    </location>
</feature>
<feature type="transmembrane region" description="Helical" evidence="1">
    <location>
        <begin position="369"/>
        <end position="389"/>
    </location>
</feature>
<feature type="sequence variant" description="In strain: K289-3A." evidence="7">
    <original>Y</original>
    <variation>F</variation>
    <location>
        <position position="181"/>
    </location>
</feature>
<feature type="sequence variant" description="In strain: K289-3A." evidence="7">
    <original>H</original>
    <variation>R</variation>
    <location>
        <position position="328"/>
    </location>
</feature>
<feature type="sequence conflict" description="In Ref. 4; AAT93158." evidence="8" ref="4">
    <original>L</original>
    <variation>P</variation>
    <location>
        <position position="162"/>
    </location>
</feature>
<organism>
    <name type="scientific">Saccharomyces cerevisiae (strain ATCC 204508 / S288c)</name>
    <name type="common">Baker's yeast</name>
    <dbReference type="NCBI Taxonomy" id="559292"/>
    <lineage>
        <taxon>Eukaryota</taxon>
        <taxon>Fungi</taxon>
        <taxon>Dikarya</taxon>
        <taxon>Ascomycota</taxon>
        <taxon>Saccharomycotina</taxon>
        <taxon>Saccharomycetes</taxon>
        <taxon>Saccharomycetales</taxon>
        <taxon>Saccharomycetaceae</taxon>
        <taxon>Saccharomyces</taxon>
    </lineage>
</organism>
<reference key="1">
    <citation type="journal article" date="1998" name="Biochem. Biophys. Res. Commun.">
        <title>The subcellular location of the yeast Saccharomyces homologue of the protein defective in the juvenile form of Batten disease.</title>
        <authorList>
            <person name="Croopnick J.B."/>
            <person name="Choi H.C."/>
            <person name="Mueller D.M."/>
        </authorList>
    </citation>
    <scope>NUCLEOTIDE SEQUENCE [GENOMIC DNA]</scope>
    <scope>SUBCELLULAR LOCATION</scope>
    <scope>VARIANTS PHE-181 AND ARG-328</scope>
    <source>
        <strain>K289-3A</strain>
    </source>
</reference>
<reference key="2">
    <citation type="journal article" date="1996" name="EMBO J.">
        <title>Complete nucleotide sequence of Saccharomyces cerevisiae chromosome X.</title>
        <authorList>
            <person name="Galibert F."/>
            <person name="Alexandraki D."/>
            <person name="Baur A."/>
            <person name="Boles E."/>
            <person name="Chalwatzis N."/>
            <person name="Chuat J.-C."/>
            <person name="Coster F."/>
            <person name="Cziepluch C."/>
            <person name="de Haan M."/>
            <person name="Domdey H."/>
            <person name="Durand P."/>
            <person name="Entian K.-D."/>
            <person name="Gatius M."/>
            <person name="Goffeau A."/>
            <person name="Grivell L.A."/>
            <person name="Hennemann A."/>
            <person name="Herbert C.J."/>
            <person name="Heumann K."/>
            <person name="Hilger F."/>
            <person name="Hollenberg C.P."/>
            <person name="Huang M.-E."/>
            <person name="Jacq C."/>
            <person name="Jauniaux J.-C."/>
            <person name="Katsoulou C."/>
            <person name="Kirchrath L."/>
            <person name="Kleine K."/>
            <person name="Kordes E."/>
            <person name="Koetter P."/>
            <person name="Liebl S."/>
            <person name="Louis E.J."/>
            <person name="Manus V."/>
            <person name="Mewes H.-W."/>
            <person name="Miosga T."/>
            <person name="Obermaier B."/>
            <person name="Perea J."/>
            <person name="Pohl T.M."/>
            <person name="Portetelle D."/>
            <person name="Pujol A."/>
            <person name="Purnelle B."/>
            <person name="Ramezani Rad M."/>
            <person name="Rasmussen S.W."/>
            <person name="Rose M."/>
            <person name="Rossau R."/>
            <person name="Schaaff-Gerstenschlaeger I."/>
            <person name="Smits P.H.M."/>
            <person name="Scarcez T."/>
            <person name="Soriano N."/>
            <person name="To Van D."/>
            <person name="Tzermia M."/>
            <person name="Van Broekhoven A."/>
            <person name="Vandenbol M."/>
            <person name="Wedler H."/>
            <person name="von Wettstein D."/>
            <person name="Wambutt R."/>
            <person name="Zagulski M."/>
            <person name="Zollner A."/>
            <person name="Karpfinger-Hartl L."/>
        </authorList>
    </citation>
    <scope>NUCLEOTIDE SEQUENCE [LARGE SCALE GENOMIC DNA]</scope>
    <source>
        <strain>ATCC 204508 / S288c</strain>
    </source>
</reference>
<reference key="3">
    <citation type="journal article" date="2014" name="G3 (Bethesda)">
        <title>The reference genome sequence of Saccharomyces cerevisiae: Then and now.</title>
        <authorList>
            <person name="Engel S.R."/>
            <person name="Dietrich F.S."/>
            <person name="Fisk D.G."/>
            <person name="Binkley G."/>
            <person name="Balakrishnan R."/>
            <person name="Costanzo M.C."/>
            <person name="Dwight S.S."/>
            <person name="Hitz B.C."/>
            <person name="Karra K."/>
            <person name="Nash R.S."/>
            <person name="Weng S."/>
            <person name="Wong E.D."/>
            <person name="Lloyd P."/>
            <person name="Skrzypek M.S."/>
            <person name="Miyasato S.R."/>
            <person name="Simison M."/>
            <person name="Cherry J.M."/>
        </authorList>
    </citation>
    <scope>GENOME REANNOTATION</scope>
    <source>
        <strain>ATCC 204508 / S288c</strain>
    </source>
</reference>
<reference key="4">
    <citation type="journal article" date="2007" name="Genome Res.">
        <title>Approaching a complete repository of sequence-verified protein-encoding clones for Saccharomyces cerevisiae.</title>
        <authorList>
            <person name="Hu Y."/>
            <person name="Rolfs A."/>
            <person name="Bhullar B."/>
            <person name="Murthy T.V.S."/>
            <person name="Zhu C."/>
            <person name="Berger M.F."/>
            <person name="Camargo A.A."/>
            <person name="Kelley F."/>
            <person name="McCarron S."/>
            <person name="Jepson D."/>
            <person name="Richardson A."/>
            <person name="Raphael J."/>
            <person name="Moreira D."/>
            <person name="Taycher E."/>
            <person name="Zuo D."/>
            <person name="Mohr S."/>
            <person name="Kane M.F."/>
            <person name="Williamson J."/>
            <person name="Simpson A.J.G."/>
            <person name="Bulyk M.L."/>
            <person name="Harlow E."/>
            <person name="Marsischky G."/>
            <person name="Kolodner R.D."/>
            <person name="LaBaer J."/>
        </authorList>
    </citation>
    <scope>NUCLEOTIDE SEQUENCE [GENOMIC DNA]</scope>
    <source>
        <strain>ATCC 204508 / S288c</strain>
    </source>
</reference>
<reference key="5">
    <citation type="journal article" date="1997" name="Yeast">
        <title>BTN1, a yeast gene corresponding to the human gene responsible for Batten's disease, is not essential for viability, mitochondrial function, or degradation of mitochondrial ATP synthase.</title>
        <authorList>
            <person name="Pearce D.A."/>
            <person name="Sherman F."/>
        </authorList>
    </citation>
    <scope>FUNCTION</scope>
</reference>
<reference key="6">
    <citation type="journal article" date="1999" name="Nat. Genet.">
        <title>Action of BTN1, the yeast orthologue of the gene mutated in Batten disease.</title>
        <authorList>
            <person name="Pearce D.A."/>
            <person name="Ferea T."/>
            <person name="Nosel S.A."/>
            <person name="Das B."/>
            <person name="Sherman F."/>
        </authorList>
    </citation>
    <scope>FUNCTION</scope>
    <scope>SUBCELLULAR LOCATION</scope>
</reference>
<reference key="7">
    <citation type="journal article" date="2000" name="J. Bacteriol.">
        <title>The yeast model for Batten disease: mutations in BTN1, BTN2, and HSP30 alter pH homeostasis.</title>
        <authorList>
            <person name="Chattopadhyay S."/>
            <person name="Muzaffar N.E."/>
            <person name="Sherman F."/>
            <person name="Pearce D.A."/>
        </authorList>
    </citation>
    <scope>FUNCTION</scope>
</reference>
<reference key="8">
    <citation type="journal article" date="2003" name="Proc. Natl. Acad. Sci. U.S.A.">
        <title>A role in vacuolar arginine transport for yeast Btn1p and for human CLN3, the protein defective in Batten disease.</title>
        <authorList>
            <person name="Kim Y."/>
            <person name="Ramirez-Montealegre D."/>
            <person name="Pearce D.A."/>
        </authorList>
    </citation>
    <scope>FUNCTION</scope>
</reference>
<reference key="9">
    <citation type="journal article" date="2005" name="Eukaryot. Cell">
        <title>Interaction among Btn1p, Btn2p, and Ist2p reveals potential interplay among the vacuole, amino acid levels, and ion homeostasis in the yeast Saccharomyces cerevisiae.</title>
        <authorList>
            <person name="Kim Y."/>
            <person name="Chattopadhyay S."/>
            <person name="Locke S."/>
            <person name="Pearce D.A."/>
        </authorList>
    </citation>
    <scope>FUNCTION</scope>
</reference>
<sequence length="408" mass="46383">MSDKSHQIYCYFWLFGLINNVLYVVILSAAVDIVGPTLPKSLVLLADIFPSLAIKLCSPFFIDRIKYSYRIWSLITMSCLGMFLVSFKNLFVCLLGISFASISSGFGEVTFLQLTHYYKQISLNGWSSGTGGAGIIGGASYMFLTSIFKVPVKLTLLVFSLLPFAFLFYFKLESNDTNLTYQSLQQIDEAEDDQLVPFPVAFTHTNASQSLYSTRQHILQTVKRLRRLVFPYMVPLTTVYLFEYLINQAVAPTLLFPINGDERSKSMPFFFHKYRDIYVTYGTLYQLGVFISRSFGHLMRMRSLYILAFLQGVNLCITVLQSWFYVTHSPWAVMILIFYEGFLGGASYVNTFLNILEQEDPDETEFAMGAVSIADSFGVFLAALLGLGLEPKLCRHQIADDRPWCRME</sequence>